<reference key="1">
    <citation type="submission" date="1996-03" db="EMBL/GenBank/DDBJ databases">
        <title>Phylogenetic relationship of Caprinae estimated by cytochrome b gene sequence analysis.</title>
        <authorList>
            <person name="Arai K."/>
            <person name="Munechika I."/>
            <person name="Ito I."/>
            <person name="Kikkawa A."/>
            <person name="Kanazawa T."/>
            <person name="Kosugiyama M."/>
        </authorList>
    </citation>
    <scope>NUCLEOTIDE SEQUENCE [GENOMIC DNA]</scope>
    <source>
        <tissue>Liver</tissue>
    </source>
</reference>
<feature type="chain" id="PRO_0000254839" description="Cytochrome b">
    <location>
        <begin position="1"/>
        <end position="379"/>
    </location>
</feature>
<feature type="transmembrane region" description="Helical" evidence="2">
    <location>
        <begin position="33"/>
        <end position="53"/>
    </location>
</feature>
<feature type="transmembrane region" description="Helical" evidence="2">
    <location>
        <begin position="77"/>
        <end position="98"/>
    </location>
</feature>
<feature type="transmembrane region" description="Helical" evidence="2">
    <location>
        <begin position="113"/>
        <end position="133"/>
    </location>
</feature>
<feature type="transmembrane region" description="Helical" evidence="2">
    <location>
        <begin position="178"/>
        <end position="198"/>
    </location>
</feature>
<feature type="transmembrane region" description="Helical" evidence="2">
    <location>
        <begin position="226"/>
        <end position="246"/>
    </location>
</feature>
<feature type="transmembrane region" description="Helical" evidence="2">
    <location>
        <begin position="288"/>
        <end position="308"/>
    </location>
</feature>
<feature type="transmembrane region" description="Helical" evidence="2">
    <location>
        <begin position="320"/>
        <end position="340"/>
    </location>
</feature>
<feature type="transmembrane region" description="Helical" evidence="2">
    <location>
        <begin position="347"/>
        <end position="367"/>
    </location>
</feature>
<feature type="binding site" description="axial binding residue" evidence="2">
    <location>
        <position position="83"/>
    </location>
    <ligand>
        <name>heme b</name>
        <dbReference type="ChEBI" id="CHEBI:60344"/>
        <label>b562</label>
    </ligand>
    <ligandPart>
        <name>Fe</name>
        <dbReference type="ChEBI" id="CHEBI:18248"/>
    </ligandPart>
</feature>
<feature type="binding site" description="axial binding residue" evidence="2">
    <location>
        <position position="97"/>
    </location>
    <ligand>
        <name>heme b</name>
        <dbReference type="ChEBI" id="CHEBI:60344"/>
        <label>b566</label>
    </ligand>
    <ligandPart>
        <name>Fe</name>
        <dbReference type="ChEBI" id="CHEBI:18248"/>
    </ligandPart>
</feature>
<feature type="binding site" description="axial binding residue" evidence="2">
    <location>
        <position position="182"/>
    </location>
    <ligand>
        <name>heme b</name>
        <dbReference type="ChEBI" id="CHEBI:60344"/>
        <label>b562</label>
    </ligand>
    <ligandPart>
        <name>Fe</name>
        <dbReference type="ChEBI" id="CHEBI:18248"/>
    </ligandPart>
</feature>
<feature type="binding site" description="axial binding residue" evidence="2">
    <location>
        <position position="196"/>
    </location>
    <ligand>
        <name>heme b</name>
        <dbReference type="ChEBI" id="CHEBI:60344"/>
        <label>b566</label>
    </ligand>
    <ligandPart>
        <name>Fe</name>
        <dbReference type="ChEBI" id="CHEBI:18248"/>
    </ligandPart>
</feature>
<feature type="binding site" evidence="2">
    <location>
        <position position="201"/>
    </location>
    <ligand>
        <name>a ubiquinone</name>
        <dbReference type="ChEBI" id="CHEBI:16389"/>
    </ligand>
</feature>
<keyword id="KW-0249">Electron transport</keyword>
<keyword id="KW-0349">Heme</keyword>
<keyword id="KW-0408">Iron</keyword>
<keyword id="KW-0472">Membrane</keyword>
<keyword id="KW-0479">Metal-binding</keyword>
<keyword id="KW-0496">Mitochondrion</keyword>
<keyword id="KW-0999">Mitochondrion inner membrane</keyword>
<keyword id="KW-0679">Respiratory chain</keyword>
<keyword id="KW-0812">Transmembrane</keyword>
<keyword id="KW-1133">Transmembrane helix</keyword>
<keyword id="KW-0813">Transport</keyword>
<keyword id="KW-0830">Ubiquinone</keyword>
<name>CYB_OVIMU</name>
<gene>
    <name type="primary">MT-CYB</name>
    <name type="synonym">COB</name>
    <name type="synonym">CYTB</name>
    <name type="synonym">MTCYB</name>
</gene>
<sequence>MINIRKTHPLMKIVNNAFIDLPAPSNISSWWNFGSLLGICLILQILTGLFLAMHYTPDTTTAFSSVTHICRDVNYGWIIRYMHANGASMFFICLFMHVGRGLYYGSYTFLETWNIGVILLFATMATAFMGYVLPWGQMSFWGATVITNLLSAIPYIGTNLVEWIWGGFSVDKATLTRFFAFHFIFPFIIAALAMVHLLFLHETGSNNPTGIPSDTDKIPFHPYYTIKDILGAILLILTLMLLVLFTPDLLGDPDNYTPANPLNTPPHIKPEWYFLFAYAILRSIPNKLGGVLALILSILVLVIMPLLHTSKQRSMMFRPISQCMFWILVADLLTLTWIGGQPVEHPYIIIGQLASIMYFLIILVMMPVASIIENNLLKW</sequence>
<protein>
    <recommendedName>
        <fullName>Cytochrome b</fullName>
    </recommendedName>
    <alternativeName>
        <fullName>Complex III subunit 3</fullName>
    </alternativeName>
    <alternativeName>
        <fullName>Complex III subunit III</fullName>
    </alternativeName>
    <alternativeName>
        <fullName>Cytochrome b-c1 complex subunit 3</fullName>
    </alternativeName>
    <alternativeName>
        <fullName>Ubiquinol-cytochrome-c reductase complex cytochrome b subunit</fullName>
    </alternativeName>
</protein>
<dbReference type="EMBL" id="D84203">
    <property type="protein sequence ID" value="BAA12253.1"/>
    <property type="molecule type" value="Genomic_DNA"/>
</dbReference>
<dbReference type="SMR" id="Q9ZZR4"/>
<dbReference type="GO" id="GO:0005743">
    <property type="term" value="C:mitochondrial inner membrane"/>
    <property type="evidence" value="ECO:0007669"/>
    <property type="project" value="UniProtKB-SubCell"/>
</dbReference>
<dbReference type="GO" id="GO:0045275">
    <property type="term" value="C:respiratory chain complex III"/>
    <property type="evidence" value="ECO:0007669"/>
    <property type="project" value="InterPro"/>
</dbReference>
<dbReference type="GO" id="GO:0046872">
    <property type="term" value="F:metal ion binding"/>
    <property type="evidence" value="ECO:0007669"/>
    <property type="project" value="UniProtKB-KW"/>
</dbReference>
<dbReference type="GO" id="GO:0008121">
    <property type="term" value="F:ubiquinol-cytochrome-c reductase activity"/>
    <property type="evidence" value="ECO:0007669"/>
    <property type="project" value="InterPro"/>
</dbReference>
<dbReference type="GO" id="GO:0006122">
    <property type="term" value="P:mitochondrial electron transport, ubiquinol to cytochrome c"/>
    <property type="evidence" value="ECO:0007669"/>
    <property type="project" value="TreeGrafter"/>
</dbReference>
<dbReference type="CDD" id="cd00290">
    <property type="entry name" value="cytochrome_b_C"/>
    <property type="match status" value="1"/>
</dbReference>
<dbReference type="CDD" id="cd00284">
    <property type="entry name" value="Cytochrome_b_N"/>
    <property type="match status" value="1"/>
</dbReference>
<dbReference type="FunFam" id="1.20.810.10:FF:000002">
    <property type="entry name" value="Cytochrome b"/>
    <property type="match status" value="1"/>
</dbReference>
<dbReference type="Gene3D" id="1.20.810.10">
    <property type="entry name" value="Cytochrome Bc1 Complex, Chain C"/>
    <property type="match status" value="1"/>
</dbReference>
<dbReference type="InterPro" id="IPR005798">
    <property type="entry name" value="Cyt_b/b6_C"/>
</dbReference>
<dbReference type="InterPro" id="IPR036150">
    <property type="entry name" value="Cyt_b/b6_C_sf"/>
</dbReference>
<dbReference type="InterPro" id="IPR005797">
    <property type="entry name" value="Cyt_b/b6_N"/>
</dbReference>
<dbReference type="InterPro" id="IPR027387">
    <property type="entry name" value="Cytb/b6-like_sf"/>
</dbReference>
<dbReference type="InterPro" id="IPR030689">
    <property type="entry name" value="Cytochrome_b"/>
</dbReference>
<dbReference type="InterPro" id="IPR048260">
    <property type="entry name" value="Cytochrome_b_C_euk/bac"/>
</dbReference>
<dbReference type="InterPro" id="IPR048259">
    <property type="entry name" value="Cytochrome_b_N_euk/bac"/>
</dbReference>
<dbReference type="InterPro" id="IPR016174">
    <property type="entry name" value="Di-haem_cyt_TM"/>
</dbReference>
<dbReference type="PANTHER" id="PTHR19271">
    <property type="entry name" value="CYTOCHROME B"/>
    <property type="match status" value="1"/>
</dbReference>
<dbReference type="PANTHER" id="PTHR19271:SF16">
    <property type="entry name" value="CYTOCHROME B"/>
    <property type="match status" value="1"/>
</dbReference>
<dbReference type="Pfam" id="PF00032">
    <property type="entry name" value="Cytochrom_B_C"/>
    <property type="match status" value="1"/>
</dbReference>
<dbReference type="Pfam" id="PF00033">
    <property type="entry name" value="Cytochrome_B"/>
    <property type="match status" value="1"/>
</dbReference>
<dbReference type="PIRSF" id="PIRSF038885">
    <property type="entry name" value="COB"/>
    <property type="match status" value="1"/>
</dbReference>
<dbReference type="SUPFAM" id="SSF81648">
    <property type="entry name" value="a domain/subunit of cytochrome bc1 complex (Ubiquinol-cytochrome c reductase)"/>
    <property type="match status" value="1"/>
</dbReference>
<dbReference type="SUPFAM" id="SSF81342">
    <property type="entry name" value="Transmembrane di-heme cytochromes"/>
    <property type="match status" value="1"/>
</dbReference>
<dbReference type="PROSITE" id="PS51003">
    <property type="entry name" value="CYTB_CTER"/>
    <property type="match status" value="1"/>
</dbReference>
<dbReference type="PROSITE" id="PS51002">
    <property type="entry name" value="CYTB_NTER"/>
    <property type="match status" value="1"/>
</dbReference>
<organism>
    <name type="scientific">Ovis aries musimon</name>
    <name type="common">Mouflon</name>
    <dbReference type="NCBI Taxonomy" id="9938"/>
    <lineage>
        <taxon>Eukaryota</taxon>
        <taxon>Metazoa</taxon>
        <taxon>Chordata</taxon>
        <taxon>Craniata</taxon>
        <taxon>Vertebrata</taxon>
        <taxon>Euteleostomi</taxon>
        <taxon>Mammalia</taxon>
        <taxon>Eutheria</taxon>
        <taxon>Laurasiatheria</taxon>
        <taxon>Artiodactyla</taxon>
        <taxon>Ruminantia</taxon>
        <taxon>Pecora</taxon>
        <taxon>Bovidae</taxon>
        <taxon>Caprinae</taxon>
        <taxon>Ovis</taxon>
    </lineage>
</organism>
<geneLocation type="mitochondrion"/>
<proteinExistence type="inferred from homology"/>
<evidence type="ECO:0000250" key="1"/>
<evidence type="ECO:0000250" key="2">
    <source>
        <dbReference type="UniProtKB" id="P00157"/>
    </source>
</evidence>
<evidence type="ECO:0000255" key="3">
    <source>
        <dbReference type="PROSITE-ProRule" id="PRU00967"/>
    </source>
</evidence>
<evidence type="ECO:0000255" key="4">
    <source>
        <dbReference type="PROSITE-ProRule" id="PRU00968"/>
    </source>
</evidence>
<accession>Q9ZZR4</accession>
<comment type="function">
    <text evidence="2">Component of the ubiquinol-cytochrome c reductase complex (complex III or cytochrome b-c1 complex) that is part of the mitochondrial respiratory chain. The b-c1 complex mediates electron transfer from ubiquinol to cytochrome c. Contributes to the generation of a proton gradient across the mitochondrial membrane that is then used for ATP synthesis.</text>
</comment>
<comment type="cofactor">
    <cofactor evidence="2">
        <name>heme b</name>
        <dbReference type="ChEBI" id="CHEBI:60344"/>
    </cofactor>
    <text evidence="2">Binds 2 heme b groups non-covalently.</text>
</comment>
<comment type="subunit">
    <text evidence="2">The cytochrome bc1 complex contains 11 subunits: 3 respiratory subunits (MT-CYB, CYC1 and UQCRFS1), 2 core proteins (UQCRC1 and UQCRC2) and 6 low-molecular weight proteins (UQCRH/QCR6, UQCRB/QCR7, UQCRQ/QCR8, UQCR10/QCR9, UQCR11/QCR10 and a cleavage product of UQCRFS1). This cytochrome bc1 complex then forms a dimer.</text>
</comment>
<comment type="subcellular location">
    <subcellularLocation>
        <location evidence="2">Mitochondrion inner membrane</location>
        <topology evidence="2">Multi-pass membrane protein</topology>
    </subcellularLocation>
</comment>
<comment type="miscellaneous">
    <text evidence="1">Heme 1 (or BL or b562) is low-potential and absorbs at about 562 nm, and heme 2 (or BH or b566) is high-potential and absorbs at about 566 nm.</text>
</comment>
<comment type="similarity">
    <text evidence="3 4">Belongs to the cytochrome b family.</text>
</comment>
<comment type="caution">
    <text evidence="2">The full-length protein contains only eight transmembrane helices, not nine as predicted by bioinformatics tools.</text>
</comment>